<reference key="1">
    <citation type="journal article" date="2000" name="Nature">
        <title>Genome sequence of the endocellular bacterial symbiont of aphids Buchnera sp. APS.</title>
        <authorList>
            <person name="Shigenobu S."/>
            <person name="Watanabe H."/>
            <person name="Hattori M."/>
            <person name="Sakaki Y."/>
            <person name="Ishikawa H."/>
        </authorList>
    </citation>
    <scope>NUCLEOTIDE SEQUENCE [LARGE SCALE GENOMIC DNA]</scope>
    <source>
        <strain>APS</strain>
    </source>
</reference>
<dbReference type="EC" id="3.4.21.-"/>
<dbReference type="EMBL" id="BA000003">
    <property type="protein sequence ID" value="BAB12993.1"/>
    <property type="status" value="ALT_INIT"/>
    <property type="molecule type" value="Genomic_DNA"/>
</dbReference>
<dbReference type="RefSeq" id="NP_240107.2">
    <property type="nucleotide sequence ID" value="NC_002528.1"/>
</dbReference>
<dbReference type="RefSeq" id="WP_010896045.1">
    <property type="nucleotide sequence ID" value="NZ_AP036055.1"/>
</dbReference>
<dbReference type="SMR" id="P57370"/>
<dbReference type="STRING" id="563178.BUAP5A_278"/>
<dbReference type="EnsemblBacteria" id="BAB12993">
    <property type="protein sequence ID" value="BAB12993"/>
    <property type="gene ID" value="BAB12993"/>
</dbReference>
<dbReference type="KEGG" id="buc:BU283"/>
<dbReference type="PATRIC" id="fig|107806.10.peg.293"/>
<dbReference type="eggNOG" id="COG0616">
    <property type="taxonomic scope" value="Bacteria"/>
</dbReference>
<dbReference type="HOGENOM" id="CLU_070316_0_0_6"/>
<dbReference type="Proteomes" id="UP000001806">
    <property type="component" value="Chromosome"/>
</dbReference>
<dbReference type="GO" id="GO:0005886">
    <property type="term" value="C:plasma membrane"/>
    <property type="evidence" value="ECO:0007669"/>
    <property type="project" value="UniProtKB-SubCell"/>
</dbReference>
<dbReference type="GO" id="GO:0004252">
    <property type="term" value="F:serine-type endopeptidase activity"/>
    <property type="evidence" value="ECO:0007669"/>
    <property type="project" value="InterPro"/>
</dbReference>
<dbReference type="GO" id="GO:0006508">
    <property type="term" value="P:proteolysis"/>
    <property type="evidence" value="ECO:0007669"/>
    <property type="project" value="UniProtKB-KW"/>
</dbReference>
<dbReference type="CDD" id="cd07023">
    <property type="entry name" value="S49_Sppa_N_C"/>
    <property type="match status" value="1"/>
</dbReference>
<dbReference type="Gene3D" id="6.20.330.10">
    <property type="match status" value="1"/>
</dbReference>
<dbReference type="Gene3D" id="3.90.226.10">
    <property type="entry name" value="2-enoyl-CoA Hydratase, Chain A, domain 1"/>
    <property type="match status" value="1"/>
</dbReference>
<dbReference type="InterPro" id="IPR029045">
    <property type="entry name" value="ClpP/crotonase-like_dom_sf"/>
</dbReference>
<dbReference type="InterPro" id="IPR002142">
    <property type="entry name" value="Peptidase_S49"/>
</dbReference>
<dbReference type="InterPro" id="IPR013703">
    <property type="entry name" value="Peptidase_S49_N_proteobac"/>
</dbReference>
<dbReference type="InterPro" id="IPR047272">
    <property type="entry name" value="S49_SppA_C"/>
</dbReference>
<dbReference type="NCBIfam" id="NF008745">
    <property type="entry name" value="PRK11778.1"/>
    <property type="match status" value="1"/>
</dbReference>
<dbReference type="PANTHER" id="PTHR42987">
    <property type="entry name" value="PEPTIDASE S49"/>
    <property type="match status" value="1"/>
</dbReference>
<dbReference type="PANTHER" id="PTHR42987:SF4">
    <property type="entry name" value="PROTEASE SOHB-RELATED"/>
    <property type="match status" value="1"/>
</dbReference>
<dbReference type="Pfam" id="PF01343">
    <property type="entry name" value="Peptidase_S49"/>
    <property type="match status" value="1"/>
</dbReference>
<dbReference type="Pfam" id="PF08496">
    <property type="entry name" value="Peptidase_S49_N"/>
    <property type="match status" value="1"/>
</dbReference>
<dbReference type="SUPFAM" id="SSF52096">
    <property type="entry name" value="ClpP/crotonase"/>
    <property type="match status" value="1"/>
</dbReference>
<accession>P57370</accession>
<protein>
    <recommendedName>
        <fullName>Probable protease SohB</fullName>
        <ecNumber>3.4.21.-</ecNumber>
    </recommendedName>
</protein>
<proteinExistence type="inferred from homology"/>
<comment type="function">
    <text evidence="1">Possible protease.</text>
</comment>
<comment type="subcellular location">
    <subcellularLocation>
        <location evidence="3">Cell membrane</location>
        <topology evidence="3">Single-pass membrane protein</topology>
    </subcellularLocation>
</comment>
<comment type="similarity">
    <text evidence="3">Belongs to the peptidase S49 family.</text>
</comment>
<comment type="sequence caution" evidence="3">
    <conflict type="erroneous initiation">
        <sequence resource="EMBL-CDS" id="BAB12993"/>
    </conflict>
</comment>
<gene>
    <name type="primary">sohB</name>
    <name type="ordered locus">BU283</name>
</gene>
<sequence length="336" mass="38676">MNLLLNYELFLAKIITFIIISISILILFYTIIKRKKNIQSKIKITLLQDNYKNVKNKILLSTMKNVEKKIWFKKQKEKNKKELLLKNNKKKLFVLDFKGDVYANEVVGLREEISAILLVANKHDEVLLRLESSGGVIHGYGLAASQLNRLRQKGIRLIVSVDKIAASGGYMMACVADYIVSAPFAIIGSIGVVGQIPNFNKLLKKCNIDFELHTAGDYKRTLTMFGNNTESTRKKFCDELNTTHKLFKSFIKEMRPSLDIEDVSNGEHWFGTIALEKKLVDQIGTSDDILISKMEEYTLLRIQYIYRKKILERFTASVTHNLSETLLKIFFYKNYL</sequence>
<organism>
    <name type="scientific">Buchnera aphidicola subsp. Acyrthosiphon pisum (strain APS)</name>
    <name type="common">Acyrthosiphon pisum symbiotic bacterium</name>
    <dbReference type="NCBI Taxonomy" id="107806"/>
    <lineage>
        <taxon>Bacteria</taxon>
        <taxon>Pseudomonadati</taxon>
        <taxon>Pseudomonadota</taxon>
        <taxon>Gammaproteobacteria</taxon>
        <taxon>Enterobacterales</taxon>
        <taxon>Erwiniaceae</taxon>
        <taxon>Buchnera</taxon>
    </lineage>
</organism>
<feature type="chain" id="PRO_0000171444" description="Probable protease SohB">
    <location>
        <begin position="1"/>
        <end position="336"/>
    </location>
</feature>
<feature type="transmembrane region" description="Helical" evidence="2">
    <location>
        <begin position="10"/>
        <end position="32"/>
    </location>
</feature>
<feature type="active site" description="Nucleophile" evidence="1">
    <location>
        <position position="167"/>
    </location>
</feature>
<feature type="active site" description="Proton donor/acceptor" evidence="1">
    <location>
        <position position="219"/>
    </location>
</feature>
<name>SOHB_BUCAI</name>
<evidence type="ECO:0000250" key="1"/>
<evidence type="ECO:0000255" key="2"/>
<evidence type="ECO:0000305" key="3"/>
<keyword id="KW-1003">Cell membrane</keyword>
<keyword id="KW-0378">Hydrolase</keyword>
<keyword id="KW-0472">Membrane</keyword>
<keyword id="KW-0645">Protease</keyword>
<keyword id="KW-1185">Reference proteome</keyword>
<keyword id="KW-0720">Serine protease</keyword>
<keyword id="KW-0812">Transmembrane</keyword>
<keyword id="KW-1133">Transmembrane helix</keyword>